<name>LEUC_ECOLU</name>
<comment type="function">
    <text evidence="1">Catalyzes the isomerization between 2-isopropylmalate and 3-isopropylmalate, via the formation of 2-isopropylmaleate.</text>
</comment>
<comment type="catalytic activity">
    <reaction evidence="1">
        <text>(2R,3S)-3-isopropylmalate = (2S)-2-isopropylmalate</text>
        <dbReference type="Rhea" id="RHEA:32287"/>
        <dbReference type="ChEBI" id="CHEBI:1178"/>
        <dbReference type="ChEBI" id="CHEBI:35121"/>
        <dbReference type="EC" id="4.2.1.33"/>
    </reaction>
</comment>
<comment type="cofactor">
    <cofactor evidence="1">
        <name>[4Fe-4S] cluster</name>
        <dbReference type="ChEBI" id="CHEBI:49883"/>
    </cofactor>
    <text evidence="1">Binds 1 [4Fe-4S] cluster per subunit.</text>
</comment>
<comment type="pathway">
    <text evidence="1">Amino-acid biosynthesis; L-leucine biosynthesis; L-leucine from 3-methyl-2-oxobutanoate: step 2/4.</text>
</comment>
<comment type="subunit">
    <text evidence="1">Heterodimer of LeuC and LeuD.</text>
</comment>
<comment type="similarity">
    <text evidence="1">Belongs to the aconitase/IPM isomerase family. LeuC type 1 subfamily.</text>
</comment>
<dbReference type="EC" id="4.2.1.33" evidence="1"/>
<dbReference type="EMBL" id="CU928163">
    <property type="protein sequence ID" value="CAR11297.1"/>
    <property type="molecule type" value="Genomic_DNA"/>
</dbReference>
<dbReference type="RefSeq" id="WP_001140662.1">
    <property type="nucleotide sequence ID" value="NC_011751.1"/>
</dbReference>
<dbReference type="RefSeq" id="YP_002410852.1">
    <property type="nucleotide sequence ID" value="NC_011751.1"/>
</dbReference>
<dbReference type="SMR" id="B7N7U7"/>
<dbReference type="STRING" id="585056.ECUMN_0074"/>
<dbReference type="KEGG" id="eum:ECUMN_0074"/>
<dbReference type="PATRIC" id="fig|585056.7.peg.262"/>
<dbReference type="HOGENOM" id="CLU_006714_3_4_6"/>
<dbReference type="UniPathway" id="UPA00048">
    <property type="reaction ID" value="UER00071"/>
</dbReference>
<dbReference type="Proteomes" id="UP000007097">
    <property type="component" value="Chromosome"/>
</dbReference>
<dbReference type="GO" id="GO:0003861">
    <property type="term" value="F:3-isopropylmalate dehydratase activity"/>
    <property type="evidence" value="ECO:0007669"/>
    <property type="project" value="UniProtKB-UniRule"/>
</dbReference>
<dbReference type="GO" id="GO:0051539">
    <property type="term" value="F:4 iron, 4 sulfur cluster binding"/>
    <property type="evidence" value="ECO:0007669"/>
    <property type="project" value="UniProtKB-KW"/>
</dbReference>
<dbReference type="GO" id="GO:0046872">
    <property type="term" value="F:metal ion binding"/>
    <property type="evidence" value="ECO:0007669"/>
    <property type="project" value="UniProtKB-KW"/>
</dbReference>
<dbReference type="GO" id="GO:0009098">
    <property type="term" value="P:L-leucine biosynthetic process"/>
    <property type="evidence" value="ECO:0007669"/>
    <property type="project" value="UniProtKB-UniRule"/>
</dbReference>
<dbReference type="CDD" id="cd01583">
    <property type="entry name" value="IPMI"/>
    <property type="match status" value="1"/>
</dbReference>
<dbReference type="FunFam" id="3.30.499.10:FF:000006">
    <property type="entry name" value="3-isopropylmalate dehydratase large subunit"/>
    <property type="match status" value="1"/>
</dbReference>
<dbReference type="FunFam" id="3.30.499.10:FF:000007">
    <property type="entry name" value="3-isopropylmalate dehydratase large subunit"/>
    <property type="match status" value="1"/>
</dbReference>
<dbReference type="Gene3D" id="3.30.499.10">
    <property type="entry name" value="Aconitase, domain 3"/>
    <property type="match status" value="2"/>
</dbReference>
<dbReference type="HAMAP" id="MF_01026">
    <property type="entry name" value="LeuC_type1"/>
    <property type="match status" value="1"/>
</dbReference>
<dbReference type="InterPro" id="IPR004430">
    <property type="entry name" value="3-IsopropMal_deHydase_lsu"/>
</dbReference>
<dbReference type="InterPro" id="IPR015931">
    <property type="entry name" value="Acnase/IPM_dHydase_lsu_aba_1/3"/>
</dbReference>
<dbReference type="InterPro" id="IPR001030">
    <property type="entry name" value="Acoase/IPM_deHydtase_lsu_aba"/>
</dbReference>
<dbReference type="InterPro" id="IPR018136">
    <property type="entry name" value="Aconitase_4Fe-4S_BS"/>
</dbReference>
<dbReference type="InterPro" id="IPR036008">
    <property type="entry name" value="Aconitase_4Fe-4S_dom"/>
</dbReference>
<dbReference type="InterPro" id="IPR050067">
    <property type="entry name" value="IPM_dehydratase_rel_enz"/>
</dbReference>
<dbReference type="InterPro" id="IPR033941">
    <property type="entry name" value="IPMI_cat"/>
</dbReference>
<dbReference type="NCBIfam" id="TIGR00170">
    <property type="entry name" value="leuC"/>
    <property type="match status" value="1"/>
</dbReference>
<dbReference type="NCBIfam" id="NF004016">
    <property type="entry name" value="PRK05478.1"/>
    <property type="match status" value="1"/>
</dbReference>
<dbReference type="NCBIfam" id="NF009116">
    <property type="entry name" value="PRK12466.1"/>
    <property type="match status" value="1"/>
</dbReference>
<dbReference type="PANTHER" id="PTHR43822:SF9">
    <property type="entry name" value="3-ISOPROPYLMALATE DEHYDRATASE"/>
    <property type="match status" value="1"/>
</dbReference>
<dbReference type="PANTHER" id="PTHR43822">
    <property type="entry name" value="HOMOACONITASE, MITOCHONDRIAL-RELATED"/>
    <property type="match status" value="1"/>
</dbReference>
<dbReference type="Pfam" id="PF00330">
    <property type="entry name" value="Aconitase"/>
    <property type="match status" value="1"/>
</dbReference>
<dbReference type="PRINTS" id="PR00415">
    <property type="entry name" value="ACONITASE"/>
</dbReference>
<dbReference type="SUPFAM" id="SSF53732">
    <property type="entry name" value="Aconitase iron-sulfur domain"/>
    <property type="match status" value="1"/>
</dbReference>
<dbReference type="PROSITE" id="PS00450">
    <property type="entry name" value="ACONITASE_1"/>
    <property type="match status" value="1"/>
</dbReference>
<dbReference type="PROSITE" id="PS01244">
    <property type="entry name" value="ACONITASE_2"/>
    <property type="match status" value="1"/>
</dbReference>
<gene>
    <name evidence="1" type="primary">leuC</name>
    <name type="ordered locus">ECUMN_0074</name>
</gene>
<evidence type="ECO:0000255" key="1">
    <source>
        <dbReference type="HAMAP-Rule" id="MF_01026"/>
    </source>
</evidence>
<accession>B7N7U7</accession>
<reference key="1">
    <citation type="journal article" date="2009" name="PLoS Genet.">
        <title>Organised genome dynamics in the Escherichia coli species results in highly diverse adaptive paths.</title>
        <authorList>
            <person name="Touchon M."/>
            <person name="Hoede C."/>
            <person name="Tenaillon O."/>
            <person name="Barbe V."/>
            <person name="Baeriswyl S."/>
            <person name="Bidet P."/>
            <person name="Bingen E."/>
            <person name="Bonacorsi S."/>
            <person name="Bouchier C."/>
            <person name="Bouvet O."/>
            <person name="Calteau A."/>
            <person name="Chiapello H."/>
            <person name="Clermont O."/>
            <person name="Cruveiller S."/>
            <person name="Danchin A."/>
            <person name="Diard M."/>
            <person name="Dossat C."/>
            <person name="Karoui M.E."/>
            <person name="Frapy E."/>
            <person name="Garry L."/>
            <person name="Ghigo J.M."/>
            <person name="Gilles A.M."/>
            <person name="Johnson J."/>
            <person name="Le Bouguenec C."/>
            <person name="Lescat M."/>
            <person name="Mangenot S."/>
            <person name="Martinez-Jehanne V."/>
            <person name="Matic I."/>
            <person name="Nassif X."/>
            <person name="Oztas S."/>
            <person name="Petit M.A."/>
            <person name="Pichon C."/>
            <person name="Rouy Z."/>
            <person name="Ruf C.S."/>
            <person name="Schneider D."/>
            <person name="Tourret J."/>
            <person name="Vacherie B."/>
            <person name="Vallenet D."/>
            <person name="Medigue C."/>
            <person name="Rocha E.P.C."/>
            <person name="Denamur E."/>
        </authorList>
    </citation>
    <scope>NUCLEOTIDE SEQUENCE [LARGE SCALE GENOMIC DNA]</scope>
    <source>
        <strain>UMN026 / ExPEC</strain>
    </source>
</reference>
<keyword id="KW-0004">4Fe-4S</keyword>
<keyword id="KW-0028">Amino-acid biosynthesis</keyword>
<keyword id="KW-0100">Branched-chain amino acid biosynthesis</keyword>
<keyword id="KW-0408">Iron</keyword>
<keyword id="KW-0411">Iron-sulfur</keyword>
<keyword id="KW-0432">Leucine biosynthesis</keyword>
<keyword id="KW-0456">Lyase</keyword>
<keyword id="KW-0479">Metal-binding</keyword>
<proteinExistence type="inferred from homology"/>
<protein>
    <recommendedName>
        <fullName evidence="1">3-isopropylmalate dehydratase large subunit</fullName>
        <ecNumber evidence="1">4.2.1.33</ecNumber>
    </recommendedName>
    <alternativeName>
        <fullName evidence="1">Alpha-IPM isomerase</fullName>
        <shortName evidence="1">IPMI</shortName>
    </alternativeName>
    <alternativeName>
        <fullName evidence="1">Isopropylmalate isomerase</fullName>
    </alternativeName>
</protein>
<feature type="chain" id="PRO_1000135683" description="3-isopropylmalate dehydratase large subunit">
    <location>
        <begin position="1"/>
        <end position="466"/>
    </location>
</feature>
<feature type="binding site" evidence="1">
    <location>
        <position position="347"/>
    </location>
    <ligand>
        <name>[4Fe-4S] cluster</name>
        <dbReference type="ChEBI" id="CHEBI:49883"/>
    </ligand>
</feature>
<feature type="binding site" evidence="1">
    <location>
        <position position="407"/>
    </location>
    <ligand>
        <name>[4Fe-4S] cluster</name>
        <dbReference type="ChEBI" id="CHEBI:49883"/>
    </ligand>
</feature>
<feature type="binding site" evidence="1">
    <location>
        <position position="410"/>
    </location>
    <ligand>
        <name>[4Fe-4S] cluster</name>
        <dbReference type="ChEBI" id="CHEBI:49883"/>
    </ligand>
</feature>
<sequence length="466" mass="49910">MAKTLYEKLFDAHVVYEAENETPLLYIDRHLVHEVTSPQAFDGLRAHGRPVRQPGKTFATMDHNVSTQTKDINACGEMARIQMQELIKNCKEFGVELYDLNHPYQGIVHVMGPEQGVTLPGMTIVCGDSHTATHGAFGALAFGIGTSEVEHVLATQTLKQGRAKTMKIEVQGKAAPGITAKDIVLAIIGKTGSAGGTGHVVEFCGEAIRDLSMEGRMTLCNMAIEMGAKAGLVAPDETTFNYVKGRLHAPKGKDFDDAVAYWKTLQTDEGATFDTVVTLRAEEISPQVTWGTNPGQVISVNDNIPDPASFADPVERASAEKALAYMGLKPGIPLTEVAIDKVFIGSCTNSRIEDLRAAAEIAKGRKVAPGVQALVVPGSGPVKAQAEAEGLDKIFIEAGFEWRLPGCSMCLAMNNDRLNPGERCASTSNRNFEGRQGRGGRTHLVSPAMAAAAAVTGHFADIRNIK</sequence>
<organism>
    <name type="scientific">Escherichia coli O17:K52:H18 (strain UMN026 / ExPEC)</name>
    <dbReference type="NCBI Taxonomy" id="585056"/>
    <lineage>
        <taxon>Bacteria</taxon>
        <taxon>Pseudomonadati</taxon>
        <taxon>Pseudomonadota</taxon>
        <taxon>Gammaproteobacteria</taxon>
        <taxon>Enterobacterales</taxon>
        <taxon>Enterobacteriaceae</taxon>
        <taxon>Escherichia</taxon>
    </lineage>
</organism>